<keyword id="KW-0256">Endoplasmic reticulum</keyword>
<keyword id="KW-0275">Fatty acid biosynthesis</keyword>
<keyword id="KW-0276">Fatty acid metabolism</keyword>
<keyword id="KW-0349">Heme</keyword>
<keyword id="KW-0408">Iron</keyword>
<keyword id="KW-0413">Isomerase</keyword>
<keyword id="KW-0444">Lipid biosynthesis</keyword>
<keyword id="KW-0443">Lipid metabolism</keyword>
<keyword id="KW-0456">Lyase</keyword>
<keyword id="KW-0472">Membrane</keyword>
<keyword id="KW-0479">Metal-binding</keyword>
<keyword id="KW-0503">Monooxygenase</keyword>
<keyword id="KW-0560">Oxidoreductase</keyword>
<keyword id="KW-0643">Prostaglandin biosynthesis</keyword>
<keyword id="KW-0644">Prostaglandin metabolism</keyword>
<keyword id="KW-1185">Reference proteome</keyword>
<keyword id="KW-0812">Transmembrane</keyword>
<keyword id="KW-1133">Transmembrane helix</keyword>
<dbReference type="EC" id="5.3.99.5" evidence="3"/>
<dbReference type="EC" id="4.2.1.152" evidence="3"/>
<dbReference type="EMBL" id="D28773">
    <property type="protein sequence ID" value="BAA05962.1"/>
    <property type="molecule type" value="mRNA"/>
</dbReference>
<dbReference type="EMBL" id="D31798">
    <property type="protein sequence ID" value="BAA22574.1"/>
    <property type="molecule type" value="mRNA"/>
</dbReference>
<dbReference type="PIR" id="S42404">
    <property type="entry name" value="S42404"/>
</dbReference>
<dbReference type="RefSeq" id="NP_036819.1">
    <property type="nucleotide sequence ID" value="NM_012687.2"/>
</dbReference>
<dbReference type="SMR" id="P49430"/>
<dbReference type="FunCoup" id="P49430">
    <property type="interactions" value="448"/>
</dbReference>
<dbReference type="STRING" id="10116.ENSRNOP00000010796"/>
<dbReference type="BindingDB" id="P49430"/>
<dbReference type="ChEMBL" id="CHEMBL4028"/>
<dbReference type="DrugCentral" id="P49430"/>
<dbReference type="PhosphoSitePlus" id="P49430"/>
<dbReference type="jPOST" id="P49430"/>
<dbReference type="PaxDb" id="10116-ENSRNOP00000010796"/>
<dbReference type="Ensembl" id="ENSRNOT00000010796.5">
    <property type="protein sequence ID" value="ENSRNOP00000010796.2"/>
    <property type="gene ID" value="ENSRNOG00000007918.5"/>
</dbReference>
<dbReference type="GeneID" id="24886"/>
<dbReference type="KEGG" id="rno:24886"/>
<dbReference type="UCSC" id="RGD:3826">
    <property type="organism name" value="rat"/>
</dbReference>
<dbReference type="AGR" id="RGD:3826"/>
<dbReference type="CTD" id="6916"/>
<dbReference type="RGD" id="3826">
    <property type="gene designation" value="Tbxas1"/>
</dbReference>
<dbReference type="eggNOG" id="KOG0158">
    <property type="taxonomic scope" value="Eukaryota"/>
</dbReference>
<dbReference type="GeneTree" id="ENSGT00940000157903"/>
<dbReference type="HOGENOM" id="CLU_001570_5_2_1"/>
<dbReference type="InParanoid" id="P49430"/>
<dbReference type="OMA" id="WPHPETF"/>
<dbReference type="OrthoDB" id="1470350at2759"/>
<dbReference type="PhylomeDB" id="P49430"/>
<dbReference type="TreeFam" id="TF105087"/>
<dbReference type="Reactome" id="R-RNO-211979">
    <property type="pathway name" value="Eicosanoids"/>
</dbReference>
<dbReference type="Reactome" id="R-RNO-2162123">
    <property type="pathway name" value="Synthesis of Prostaglandins (PG) and Thromboxanes (TX)"/>
</dbReference>
<dbReference type="PRO" id="PR:P49430"/>
<dbReference type="Proteomes" id="UP000002494">
    <property type="component" value="Chromosome 4"/>
</dbReference>
<dbReference type="Bgee" id="ENSRNOG00000007918">
    <property type="expression patterns" value="Expressed in colon and 19 other cell types or tissues"/>
</dbReference>
<dbReference type="GO" id="GO:0005829">
    <property type="term" value="C:cytosol"/>
    <property type="evidence" value="ECO:0007669"/>
    <property type="project" value="Ensembl"/>
</dbReference>
<dbReference type="GO" id="GO:0005789">
    <property type="term" value="C:endoplasmic reticulum membrane"/>
    <property type="evidence" value="ECO:0000250"/>
    <property type="project" value="UniProtKB"/>
</dbReference>
<dbReference type="GO" id="GO:0036134">
    <property type="term" value="F:12-hydroxyheptadecatrienoic acid synthase activity"/>
    <property type="evidence" value="ECO:0007669"/>
    <property type="project" value="RHEA"/>
</dbReference>
<dbReference type="GO" id="GO:0020037">
    <property type="term" value="F:heme binding"/>
    <property type="evidence" value="ECO:0000250"/>
    <property type="project" value="UniProtKB"/>
</dbReference>
<dbReference type="GO" id="GO:0106256">
    <property type="term" value="F:hydroperoxy icosatetraenoate dehydratase activity"/>
    <property type="evidence" value="ECO:0000250"/>
    <property type="project" value="UniProtKB"/>
</dbReference>
<dbReference type="GO" id="GO:0005506">
    <property type="term" value="F:iron ion binding"/>
    <property type="evidence" value="ECO:0007669"/>
    <property type="project" value="InterPro"/>
</dbReference>
<dbReference type="GO" id="GO:0004497">
    <property type="term" value="F:monooxygenase activity"/>
    <property type="evidence" value="ECO:0007669"/>
    <property type="project" value="UniProtKB-KW"/>
</dbReference>
<dbReference type="GO" id="GO:0016705">
    <property type="term" value="F:oxidoreductase activity, acting on paired donors, with incorporation or reduction of molecular oxygen"/>
    <property type="evidence" value="ECO:0007669"/>
    <property type="project" value="InterPro"/>
</dbReference>
<dbReference type="GO" id="GO:0004796">
    <property type="term" value="F:thromboxane-A synthase activity"/>
    <property type="evidence" value="ECO:0000266"/>
    <property type="project" value="RGD"/>
</dbReference>
<dbReference type="GO" id="GO:0006690">
    <property type="term" value="P:icosanoid metabolic process"/>
    <property type="evidence" value="ECO:0000250"/>
    <property type="project" value="UniProtKB"/>
</dbReference>
<dbReference type="GO" id="GO:0030644">
    <property type="term" value="P:intracellular chloride ion homeostasis"/>
    <property type="evidence" value="ECO:0000315"/>
    <property type="project" value="RGD"/>
</dbReference>
<dbReference type="GO" id="GO:0045907">
    <property type="term" value="P:positive regulation of vasoconstriction"/>
    <property type="evidence" value="ECO:0000315"/>
    <property type="project" value="RGD"/>
</dbReference>
<dbReference type="GO" id="GO:0001516">
    <property type="term" value="P:prostaglandin biosynthetic process"/>
    <property type="evidence" value="ECO:0000250"/>
    <property type="project" value="UniProtKB"/>
</dbReference>
<dbReference type="GO" id="GO:0045471">
    <property type="term" value="P:response to ethanol"/>
    <property type="evidence" value="ECO:0000270"/>
    <property type="project" value="RGD"/>
</dbReference>
<dbReference type="GO" id="GO:0070542">
    <property type="term" value="P:response to fatty acid"/>
    <property type="evidence" value="ECO:0000270"/>
    <property type="project" value="RGD"/>
</dbReference>
<dbReference type="FunFam" id="1.10.630.10:FF:000003">
    <property type="entry name" value="cytochrome P450 3A12-like isoform X2"/>
    <property type="match status" value="1"/>
</dbReference>
<dbReference type="Gene3D" id="1.10.630.10">
    <property type="entry name" value="Cytochrome P450"/>
    <property type="match status" value="1"/>
</dbReference>
<dbReference type="InterPro" id="IPR001128">
    <property type="entry name" value="Cyt_P450"/>
</dbReference>
<dbReference type="InterPro" id="IPR017972">
    <property type="entry name" value="Cyt_P450_CS"/>
</dbReference>
<dbReference type="InterPro" id="IPR002401">
    <property type="entry name" value="Cyt_P450_E_grp-I"/>
</dbReference>
<dbReference type="InterPro" id="IPR036396">
    <property type="entry name" value="Cyt_P450_sf"/>
</dbReference>
<dbReference type="InterPro" id="IPR050705">
    <property type="entry name" value="Cytochrome_P450_3A"/>
</dbReference>
<dbReference type="PANTHER" id="PTHR24302:SF47">
    <property type="entry name" value="CYTOCHROME P450"/>
    <property type="match status" value="1"/>
</dbReference>
<dbReference type="PANTHER" id="PTHR24302">
    <property type="entry name" value="CYTOCHROME P450 FAMILY 3"/>
    <property type="match status" value="1"/>
</dbReference>
<dbReference type="Pfam" id="PF00067">
    <property type="entry name" value="p450"/>
    <property type="match status" value="2"/>
</dbReference>
<dbReference type="PRINTS" id="PR00463">
    <property type="entry name" value="EP450I"/>
</dbReference>
<dbReference type="PRINTS" id="PR00385">
    <property type="entry name" value="P450"/>
</dbReference>
<dbReference type="SUPFAM" id="SSF48264">
    <property type="entry name" value="Cytochrome P450"/>
    <property type="match status" value="1"/>
</dbReference>
<dbReference type="PROSITE" id="PS00086">
    <property type="entry name" value="CYTOCHROME_P450"/>
    <property type="match status" value="1"/>
</dbReference>
<reference key="1">
    <citation type="journal article" date="1994" name="FEBS Lett.">
        <title>Abundant expression of thromboxane synthase in rat macrophages.</title>
        <authorList>
            <person name="Tone Y."/>
            <person name="Miyata A."/>
            <person name="Hara S."/>
            <person name="Yukawa S."/>
            <person name="Tanabe T."/>
        </authorList>
    </citation>
    <scope>NUCLEOTIDE SEQUENCE [MRNA]</scope>
    <scope>TISSUE SPECIFICITY</scope>
    <source>
        <strain>Sprague-Dawley</strain>
    </source>
</reference>
<reference key="2">
    <citation type="journal article" date="1997" name="Prostaglandins">
        <title>Rat kidney thromboxane synthase: cDNA cloning and gene expression regulation in hydronephrotic kidney.</title>
        <authorList>
            <person name="Tsutsumi E."/>
            <person name="Takeuchi K."/>
            <person name="Abe T."/>
            <person name="Takahashi N."/>
            <person name="Kato T."/>
            <person name="Taniyama Y."/>
            <person name="Ikeda Y."/>
            <person name="Ito S."/>
            <person name="Abe K."/>
        </authorList>
    </citation>
    <scope>NUCLEOTIDE SEQUENCE [MRNA]</scope>
    <scope>TISSUE SPECIFICITY</scope>
    <source>
        <strain>Sprague-Dawley</strain>
    </source>
</reference>
<feature type="chain" id="PRO_0000052259" description="Thromboxane-A synthase">
    <location>
        <begin position="1"/>
        <end position="533"/>
    </location>
</feature>
<feature type="topological domain" description="Cytoplasmic" evidence="3">
    <location>
        <begin position="1"/>
        <end position="10"/>
    </location>
</feature>
<feature type="transmembrane region" description="Helical" evidence="4">
    <location>
        <begin position="11"/>
        <end position="31"/>
    </location>
</feature>
<feature type="topological domain" description="Lumenal" evidence="3">
    <location>
        <begin position="32"/>
        <end position="75"/>
    </location>
</feature>
<feature type="transmembrane region" description="Helical" evidence="4">
    <location>
        <begin position="76"/>
        <end position="96"/>
    </location>
</feature>
<feature type="topological domain" description="Cytoplasmic" evidence="3">
    <location>
        <begin position="97"/>
        <end position="223"/>
    </location>
</feature>
<feature type="transmembrane region" description="Helical" evidence="4">
    <location>
        <begin position="224"/>
        <end position="244"/>
    </location>
</feature>
<feature type="topological domain" description="Lumenal" evidence="3">
    <location>
        <begin position="245"/>
        <end position="335"/>
    </location>
</feature>
<feature type="transmembrane region" description="Helical" evidence="4">
    <location>
        <begin position="336"/>
        <end position="356"/>
    </location>
</feature>
<feature type="topological domain" description="Cytoplasmic" evidence="3">
    <location>
        <begin position="357"/>
        <end position="533"/>
    </location>
</feature>
<feature type="binding site" description="axial binding residue" evidence="2">
    <location>
        <position position="479"/>
    </location>
    <ligand>
        <name>heme</name>
        <dbReference type="ChEBI" id="CHEBI:30413"/>
    </ligand>
    <ligandPart>
        <name>Fe</name>
        <dbReference type="ChEBI" id="CHEBI:18248"/>
    </ligandPart>
</feature>
<protein>
    <recommendedName>
        <fullName>Thromboxane-A synthase</fullName>
        <shortName>TXA synthase</shortName>
        <shortName>TXS</shortName>
        <ecNumber evidence="3">5.3.99.5</ecNumber>
    </recommendedName>
    <alternativeName>
        <fullName>Cytochrome P450 5A1</fullName>
    </alternativeName>
    <alternativeName>
        <fullName>Hydroperoxy icosatetraenoate dehydratase</fullName>
        <ecNumber evidence="3">4.2.1.152</ecNumber>
    </alternativeName>
</protein>
<proteinExistence type="evidence at transcript level"/>
<gene>
    <name type="primary">Tbxas1</name>
    <name type="synonym">Cyp5</name>
    <name type="synonym">Cyp5a1</name>
</gene>
<accession>P49430</accession>
<name>THAS_RAT</name>
<evidence type="ECO:0000250" key="1"/>
<evidence type="ECO:0000250" key="2">
    <source>
        <dbReference type="UniProtKB" id="P14779"/>
    </source>
</evidence>
<evidence type="ECO:0000250" key="3">
    <source>
        <dbReference type="UniProtKB" id="P24557"/>
    </source>
</evidence>
<evidence type="ECO:0000255" key="4"/>
<evidence type="ECO:0000269" key="5">
    <source>
    </source>
</evidence>
<evidence type="ECO:0000269" key="6">
    <source>
    </source>
</evidence>
<evidence type="ECO:0000305" key="7"/>
<organism>
    <name type="scientific">Rattus norvegicus</name>
    <name type="common">Rat</name>
    <dbReference type="NCBI Taxonomy" id="10116"/>
    <lineage>
        <taxon>Eukaryota</taxon>
        <taxon>Metazoa</taxon>
        <taxon>Chordata</taxon>
        <taxon>Craniata</taxon>
        <taxon>Vertebrata</taxon>
        <taxon>Euteleostomi</taxon>
        <taxon>Mammalia</taxon>
        <taxon>Eutheria</taxon>
        <taxon>Euarchontoglires</taxon>
        <taxon>Glires</taxon>
        <taxon>Rodentia</taxon>
        <taxon>Myomorpha</taxon>
        <taxon>Muroidea</taxon>
        <taxon>Muridae</taxon>
        <taxon>Murinae</taxon>
        <taxon>Rattus</taxon>
    </lineage>
</organism>
<comment type="function">
    <text evidence="3">Catalyzes the conversion of prostaglandin H2 (PGH2) to thromboxane A2 (TXA2), a potent inducer of blood vessel constriction and platelet aggregation. Also cleaves PGH2 to 12-hydroxy-heptadecatrienoicacid (12-HHT) and malondialdehyde, which is known to act as a mediator of DNA damage. 12-HHT and malondialdehyde are formed stoichiometrically in the same amounts as TXA2. Additionally, displays dehydratase activity, toward (15S)-hydroperoxy-(5Z,8Z,11Z,13E)-eicosatetraenoate (15(S)-HPETE) producing 15-KETE and 15-HETE.</text>
</comment>
<comment type="catalytic activity">
    <reaction evidence="3">
        <text>prostaglandin H2 = thromboxane A2</text>
        <dbReference type="Rhea" id="RHEA:17137"/>
        <dbReference type="ChEBI" id="CHEBI:57405"/>
        <dbReference type="ChEBI" id="CHEBI:57445"/>
        <dbReference type="EC" id="5.3.99.5"/>
    </reaction>
    <physiologicalReaction direction="left-to-right" evidence="3">
        <dbReference type="Rhea" id="RHEA:17138"/>
    </physiologicalReaction>
</comment>
<comment type="catalytic activity">
    <reaction evidence="3">
        <text>prostaglandin H2 = (12S)-hydroxy-(5Z,8E,10E)-heptadecatrienoate + malonaldehyde</text>
        <dbReference type="Rhea" id="RHEA:48644"/>
        <dbReference type="ChEBI" id="CHEBI:57405"/>
        <dbReference type="ChEBI" id="CHEBI:90694"/>
        <dbReference type="ChEBI" id="CHEBI:566274"/>
    </reaction>
</comment>
<comment type="catalytic activity">
    <reaction evidence="3">
        <text>a hydroperoxyeicosatetraenoate = an oxoeicosatetraenoate + H2O</text>
        <dbReference type="Rhea" id="RHEA:55556"/>
        <dbReference type="ChEBI" id="CHEBI:15377"/>
        <dbReference type="ChEBI" id="CHEBI:59720"/>
        <dbReference type="ChEBI" id="CHEBI:131859"/>
        <dbReference type="EC" id="4.2.1.152"/>
    </reaction>
    <physiologicalReaction direction="left-to-right" evidence="3">
        <dbReference type="Rhea" id="RHEA:55557"/>
    </physiologicalReaction>
</comment>
<comment type="catalytic activity">
    <reaction evidence="3">
        <text>(15S)-hydroperoxy-(5Z,8Z,11Z,13E)-eicosatetraenoate = 15-oxo-(5Z,8Z,11Z,13E)-eicosatetraenoate + H2O</text>
        <dbReference type="Rhea" id="RHEA:48636"/>
        <dbReference type="ChEBI" id="CHEBI:15377"/>
        <dbReference type="ChEBI" id="CHEBI:57410"/>
        <dbReference type="ChEBI" id="CHEBI:57446"/>
    </reaction>
    <physiologicalReaction direction="left-to-right" evidence="3">
        <dbReference type="Rhea" id="RHEA:48637"/>
    </physiologicalReaction>
</comment>
<comment type="catalytic activity">
    <reaction evidence="3">
        <text>(15S)-hydroperoxy-(5Z,8Z,11Z,13E)-eicosatetraenoate + AH2 = (15S)-hydroxy-(5Z,8Z,11Z,13E)-eicosatetraenoate + A + H2O</text>
        <dbReference type="Rhea" id="RHEA:48856"/>
        <dbReference type="ChEBI" id="CHEBI:13193"/>
        <dbReference type="ChEBI" id="CHEBI:15377"/>
        <dbReference type="ChEBI" id="CHEBI:17499"/>
        <dbReference type="ChEBI" id="CHEBI:57409"/>
        <dbReference type="ChEBI" id="CHEBI:57446"/>
    </reaction>
    <physiologicalReaction direction="left-to-right" evidence="3">
        <dbReference type="Rhea" id="RHEA:48857"/>
    </physiologicalReaction>
</comment>
<comment type="cofactor">
    <cofactor evidence="3">
        <name>heme</name>
        <dbReference type="ChEBI" id="CHEBI:30413"/>
    </cofactor>
</comment>
<comment type="subunit">
    <text evidence="3">Monomer.</text>
</comment>
<comment type="subcellular location">
    <subcellularLocation>
        <location evidence="3">Endoplasmic reticulum membrane</location>
        <topology evidence="1">Multi-pass membrane protein</topology>
    </subcellularLocation>
</comment>
<comment type="tissue specificity">
    <text evidence="5 6">Expressed in bone marrow, spleen, lung, thymus, liver, uterus, and macrophages.</text>
</comment>
<comment type="similarity">
    <text evidence="7">Belongs to the cytochrome P450 family.</text>
</comment>
<sequence>MEVLGLLKFEVSGTVVTVTLSVVLLALLKWYSTSAFSRLRKLGIRHPEPSPFVGNLMFFRQGFWESHLELRERYGPLCGYYLGRRMYIVISDPDMIKEVLVENFSNFSNRMASGLEPKLIADSVLMLRDRRWEEVRGALMSAFSPEKLNEMTPLISQACELLLSHLKHSAASGDAFDIQRCYCCFTTNVVASVAFGIEVNSQDAPEDPFVQHCQRVFAFSTPRPLLALILSFPSIMVPLARILPNKNRDELNGFFNTLIRNVIALRDKQTAEERRGDFLQMVLDAQRSMSSVGVEAFDMVTEALSSAECMGDPPQRCHPTSTAKPLTVDEIAGQAFLFLIAGHEITTNTLSFITYLLATHPECQERLLKEVDLFMEKHPAPEYCNLQEGLPYLDMVVAETLRMYPPAFRFTREAAQDCEVLGQHIPAGSVLEIAVGALHHDPEHWPNPETFDPERFTAEARLQQKPFTYLPFGAGPRSCLGVRLGLLVVKLTLLQVLHKFRFEACPETQVPLQLESKSALCPKNGVYVKIVSR</sequence>